<name>PSD_PARM1</name>
<reference key="1">
    <citation type="journal article" date="2005" name="DNA Res.">
        <title>Complete genome sequence of the facultative anaerobic magnetotactic bacterium Magnetospirillum sp. strain AMB-1.</title>
        <authorList>
            <person name="Matsunaga T."/>
            <person name="Okamura Y."/>
            <person name="Fukuda Y."/>
            <person name="Wahyudi A.T."/>
            <person name="Murase Y."/>
            <person name="Takeyama H."/>
        </authorList>
    </citation>
    <scope>NUCLEOTIDE SEQUENCE [LARGE SCALE GENOMIC DNA]</scope>
    <source>
        <strain>ATCC 700264 / AMB-1</strain>
    </source>
</reference>
<gene>
    <name evidence="1" type="primary">psd</name>
    <name type="ordered locus">amb0604</name>
</gene>
<comment type="function">
    <text evidence="1">Catalyzes the formation of phosphatidylethanolamine (PtdEtn) from phosphatidylserine (PtdSer).</text>
</comment>
<comment type="catalytic activity">
    <reaction evidence="1">
        <text>a 1,2-diacyl-sn-glycero-3-phospho-L-serine + H(+) = a 1,2-diacyl-sn-glycero-3-phosphoethanolamine + CO2</text>
        <dbReference type="Rhea" id="RHEA:20828"/>
        <dbReference type="ChEBI" id="CHEBI:15378"/>
        <dbReference type="ChEBI" id="CHEBI:16526"/>
        <dbReference type="ChEBI" id="CHEBI:57262"/>
        <dbReference type="ChEBI" id="CHEBI:64612"/>
        <dbReference type="EC" id="4.1.1.65"/>
    </reaction>
</comment>
<comment type="cofactor">
    <cofactor evidence="1">
        <name>pyruvate</name>
        <dbReference type="ChEBI" id="CHEBI:15361"/>
    </cofactor>
    <text evidence="1">Binds 1 pyruvoyl group covalently per subunit.</text>
</comment>
<comment type="pathway">
    <text evidence="1">Phospholipid metabolism; phosphatidylethanolamine biosynthesis; phosphatidylethanolamine from CDP-diacylglycerol: step 2/2.</text>
</comment>
<comment type="subunit">
    <text evidence="1">Heterodimer of a large membrane-associated beta subunit and a small pyruvoyl-containing alpha subunit.</text>
</comment>
<comment type="subcellular location">
    <subcellularLocation>
        <location evidence="1">Cell membrane</location>
        <topology evidence="1">Peripheral membrane protein</topology>
    </subcellularLocation>
</comment>
<comment type="PTM">
    <text evidence="1">Is synthesized initially as an inactive proenzyme. Formation of the active enzyme involves a self-maturation process in which the active site pyruvoyl group is generated from an internal serine residue via an autocatalytic post-translational modification. Two non-identical subunits are generated from the proenzyme in this reaction, and the pyruvate is formed at the N-terminus of the alpha chain, which is derived from the carboxyl end of the proenzyme. The post-translation cleavage follows an unusual pathway, termed non-hydrolytic serinolysis, in which the side chain hydroxyl group of the serine supplies its oxygen atom to form the C-terminus of the beta chain, while the remainder of the serine residue undergoes an oxidative deamination to produce ammonia and the pyruvoyl prosthetic group on the alpha chain.</text>
</comment>
<comment type="similarity">
    <text evidence="1">Belongs to the phosphatidylserine decarboxylase family. PSD-A subfamily.</text>
</comment>
<proteinExistence type="inferred from homology"/>
<keyword id="KW-1003">Cell membrane</keyword>
<keyword id="KW-0210">Decarboxylase</keyword>
<keyword id="KW-0444">Lipid biosynthesis</keyword>
<keyword id="KW-0443">Lipid metabolism</keyword>
<keyword id="KW-0456">Lyase</keyword>
<keyword id="KW-0472">Membrane</keyword>
<keyword id="KW-0594">Phospholipid biosynthesis</keyword>
<keyword id="KW-1208">Phospholipid metabolism</keyword>
<keyword id="KW-0670">Pyruvate</keyword>
<keyword id="KW-0865">Zymogen</keyword>
<evidence type="ECO:0000255" key="1">
    <source>
        <dbReference type="HAMAP-Rule" id="MF_00664"/>
    </source>
</evidence>
<accession>Q2W9R7</accession>
<organism>
    <name type="scientific">Paramagnetospirillum magneticum (strain ATCC 700264 / AMB-1)</name>
    <name type="common">Magnetospirillum magneticum</name>
    <dbReference type="NCBI Taxonomy" id="342108"/>
    <lineage>
        <taxon>Bacteria</taxon>
        <taxon>Pseudomonadati</taxon>
        <taxon>Pseudomonadota</taxon>
        <taxon>Alphaproteobacteria</taxon>
        <taxon>Rhodospirillales</taxon>
        <taxon>Magnetospirillaceae</taxon>
        <taxon>Paramagnetospirillum</taxon>
    </lineage>
</organism>
<dbReference type="EC" id="4.1.1.65" evidence="1"/>
<dbReference type="EMBL" id="AP007255">
    <property type="protein sequence ID" value="BAE49408.1"/>
    <property type="molecule type" value="Genomic_DNA"/>
</dbReference>
<dbReference type="STRING" id="342108.amb0604"/>
<dbReference type="KEGG" id="mag:amb0604"/>
<dbReference type="HOGENOM" id="CLU_072492_0_0_5"/>
<dbReference type="OrthoDB" id="9790893at2"/>
<dbReference type="UniPathway" id="UPA00558">
    <property type="reaction ID" value="UER00616"/>
</dbReference>
<dbReference type="Proteomes" id="UP000007058">
    <property type="component" value="Chromosome"/>
</dbReference>
<dbReference type="GO" id="GO:0005886">
    <property type="term" value="C:plasma membrane"/>
    <property type="evidence" value="ECO:0007669"/>
    <property type="project" value="UniProtKB-SubCell"/>
</dbReference>
<dbReference type="GO" id="GO:0004609">
    <property type="term" value="F:phosphatidylserine decarboxylase activity"/>
    <property type="evidence" value="ECO:0007669"/>
    <property type="project" value="UniProtKB-UniRule"/>
</dbReference>
<dbReference type="GO" id="GO:0006646">
    <property type="term" value="P:phosphatidylethanolamine biosynthetic process"/>
    <property type="evidence" value="ECO:0007669"/>
    <property type="project" value="UniProtKB-UniRule"/>
</dbReference>
<dbReference type="HAMAP" id="MF_00664">
    <property type="entry name" value="PS_decarb_PSD_A"/>
    <property type="match status" value="1"/>
</dbReference>
<dbReference type="InterPro" id="IPR003817">
    <property type="entry name" value="PS_Dcarbxylase"/>
</dbReference>
<dbReference type="InterPro" id="IPR033175">
    <property type="entry name" value="PSD-A"/>
</dbReference>
<dbReference type="NCBIfam" id="NF003677">
    <property type="entry name" value="PRK05305.1-1"/>
    <property type="match status" value="1"/>
</dbReference>
<dbReference type="NCBIfam" id="NF003678">
    <property type="entry name" value="PRK05305.1-2"/>
    <property type="match status" value="1"/>
</dbReference>
<dbReference type="NCBIfam" id="NF003679">
    <property type="entry name" value="PRK05305.1-3"/>
    <property type="match status" value="1"/>
</dbReference>
<dbReference type="PANTHER" id="PTHR35809">
    <property type="entry name" value="ARCHAETIDYLSERINE DECARBOXYLASE PROENZYME-RELATED"/>
    <property type="match status" value="1"/>
</dbReference>
<dbReference type="PANTHER" id="PTHR35809:SF1">
    <property type="entry name" value="ARCHAETIDYLSERINE DECARBOXYLASE PROENZYME-RELATED"/>
    <property type="match status" value="1"/>
</dbReference>
<dbReference type="Pfam" id="PF02666">
    <property type="entry name" value="PS_Dcarbxylase"/>
    <property type="match status" value="1"/>
</dbReference>
<sequence>MRGEAVQAQQISLTKYLWFPINREGWPFVGLFALGALLLGQIWGPLGWAGALLTCWCAWFFRDPDRVTPTRDGLVISPADGVVQMVGMVAPPPELDMGDAPRMRISVFMSVFSVHINRCPVDGTIVKCSYRPGKFLDASLDKASADNERMSVRMSRADGREIAFVQIAGLVARRIKCDLKDGQQVRAGQRFGLIRFGSRVDVYLPDGVAPLVSLGQSIIAGETVLADLDSTEGARQGEIR</sequence>
<protein>
    <recommendedName>
        <fullName evidence="1">Phosphatidylserine decarboxylase proenzyme</fullName>
        <ecNumber evidence="1">4.1.1.65</ecNumber>
    </recommendedName>
    <component>
        <recommendedName>
            <fullName evidence="1">Phosphatidylserine decarboxylase alpha chain</fullName>
        </recommendedName>
    </component>
    <component>
        <recommendedName>
            <fullName evidence="1">Phosphatidylserine decarboxylase beta chain</fullName>
        </recommendedName>
    </component>
</protein>
<feature type="chain" id="PRO_0000262225" description="Phosphatidylserine decarboxylase beta chain" evidence="1">
    <location>
        <begin position="1"/>
        <end position="197"/>
    </location>
</feature>
<feature type="chain" id="PRO_0000262226" description="Phosphatidylserine decarboxylase alpha chain" evidence="1">
    <location>
        <begin position="198"/>
        <end position="240"/>
    </location>
</feature>
<feature type="active site" description="Schiff-base intermediate with substrate; via pyruvic acid" evidence="1">
    <location>
        <position position="198"/>
    </location>
</feature>
<feature type="site" description="Cleavage (non-hydrolytic); by autocatalysis" evidence="1">
    <location>
        <begin position="197"/>
        <end position="198"/>
    </location>
</feature>
<feature type="modified residue" description="Pyruvic acid (Ser); by autocatalysis" evidence="1">
    <location>
        <position position="198"/>
    </location>
</feature>